<evidence type="ECO:0000250" key="1"/>
<evidence type="ECO:0000250" key="2">
    <source>
        <dbReference type="UniProtKB" id="P01009"/>
    </source>
</evidence>
<evidence type="ECO:0000255" key="3"/>
<evidence type="ECO:0000305" key="4"/>
<name>A1AT_PONAB</name>
<keyword id="KW-0011">Acute phase</keyword>
<keyword id="KW-0325">Glycoprotein</keyword>
<keyword id="KW-0597">Phosphoprotein</keyword>
<keyword id="KW-0646">Protease inhibitor</keyword>
<keyword id="KW-1185">Reference proteome</keyword>
<keyword id="KW-0964">Secreted</keyword>
<keyword id="KW-0722">Serine protease inhibitor</keyword>
<keyword id="KW-0732">Signal</keyword>
<organism>
    <name type="scientific">Pongo abelii</name>
    <name type="common">Sumatran orangutan</name>
    <name type="synonym">Pongo pygmaeus abelii</name>
    <dbReference type="NCBI Taxonomy" id="9601"/>
    <lineage>
        <taxon>Eukaryota</taxon>
        <taxon>Metazoa</taxon>
        <taxon>Chordata</taxon>
        <taxon>Craniata</taxon>
        <taxon>Vertebrata</taxon>
        <taxon>Euteleostomi</taxon>
        <taxon>Mammalia</taxon>
        <taxon>Eutheria</taxon>
        <taxon>Euarchontoglires</taxon>
        <taxon>Primates</taxon>
        <taxon>Haplorrhini</taxon>
        <taxon>Catarrhini</taxon>
        <taxon>Hominidae</taxon>
        <taxon>Pongo</taxon>
    </lineage>
</organism>
<proteinExistence type="evidence at transcript level"/>
<sequence length="418" mass="46861">MPSSVSWGILLLAGLCCLVPVSLAEDPQGDAAQKTDTSHHDQDHPTFNKITPNLAEFAFSLYRQLAHQSNSTNIFFSPVSIATAFAMLSLGTKADTHSEILEGLHFNLTEIPEAQVHEGFQELLRTLNQPDSQLQLTTGNGLFLNESLKLVDKFLEDVKKLYHSDAFTVNFGDTEEAKKQINDYVEKGTQGKIVDLVKELDRDTVFALVNYIFFKGKWERPFEVKDTKEEDFHVDEVTTVKVPMMRRLGMFNIHYCEKLSSWVLLMKYLGNATAIFFLPDEGKLQHLENELTHDIITKFLENENRRSASLHLPKLSITGTYDLKRVLGQLGITKVFSNGADLSGVTEEAPLKLSKAVHKAVLTIDEKGTEAAGAMFLEAIPMSIPPEVKFNKPFVFLMIEQNTKSPLFVGKVVNPTQK</sequence>
<comment type="function">
    <text evidence="1">Inhibitor of serine proteases. Its primary target is elastase, but it also has a moderate affinity for plasmin and thrombin. Inhibits trypsin, chymotrypsin and plasminogen activator (By similarity).</text>
</comment>
<comment type="subunit">
    <text evidence="2">Interacts with CELA2A (By similarity). Interacts with ERGIC3 and LMAN1/ERGIC53 (By similarity). Interacts with PRSS1/Trypsin (By similarity).</text>
</comment>
<comment type="subcellular location">
    <subcellularLocation>
        <location evidence="1">Secreted</location>
    </subcellularLocation>
</comment>
<comment type="tissue specificity">
    <text>Plasma.</text>
</comment>
<comment type="domain">
    <text evidence="1">The reactive center loop (RCL) extends out from the body of the protein and directs binding to the target protease. The protease cleaves the serpin at the reactive site within the RCL, establishing a covalent linkage between the carboxyl group of the serpin reactive site and the serine hydroxyl of the protease. The resulting inactive serpin-protease complex is highly stable (By similarity).</text>
</comment>
<comment type="similarity">
    <text evidence="4">Belongs to the serpin family.</text>
</comment>
<dbReference type="EMBL" id="CR857285">
    <property type="protein sequence ID" value="CAH89581.1"/>
    <property type="molecule type" value="mRNA"/>
</dbReference>
<dbReference type="EMBL" id="CR858153">
    <property type="protein sequence ID" value="CAH90392.1"/>
    <property type="molecule type" value="mRNA"/>
</dbReference>
<dbReference type="EMBL" id="CR925936">
    <property type="protein sequence ID" value="CAI29594.1"/>
    <property type="molecule type" value="mRNA"/>
</dbReference>
<dbReference type="RefSeq" id="NP_001124697.1">
    <property type="nucleotide sequence ID" value="NM_001131225.2"/>
</dbReference>
<dbReference type="RefSeq" id="NP_001128914.1">
    <property type="nucleotide sequence ID" value="NM_001135442.1"/>
</dbReference>
<dbReference type="RefSeq" id="NP_001417660.1">
    <property type="nucleotide sequence ID" value="NM_001430731.1"/>
</dbReference>
<dbReference type="RefSeq" id="NP_001417661.1">
    <property type="nucleotide sequence ID" value="NM_001430732.1"/>
</dbReference>
<dbReference type="RefSeq" id="XP_009247699.1">
    <property type="nucleotide sequence ID" value="XM_009249424.1"/>
</dbReference>
<dbReference type="RefSeq" id="XP_009247700.1">
    <property type="nucleotide sequence ID" value="XM_009249425.1"/>
</dbReference>
<dbReference type="RefSeq" id="XP_009247701.1">
    <property type="nucleotide sequence ID" value="XM_009249426.1"/>
</dbReference>
<dbReference type="RefSeq" id="XP_009247702.1">
    <property type="nucleotide sequence ID" value="XM_009249427.1"/>
</dbReference>
<dbReference type="RefSeq" id="XP_009247703.1">
    <property type="nucleotide sequence ID" value="XM_009249428.1"/>
</dbReference>
<dbReference type="RefSeq" id="XP_009247704.1">
    <property type="nucleotide sequence ID" value="XM_009249429.1"/>
</dbReference>
<dbReference type="RefSeq" id="XP_009247705.1">
    <property type="nucleotide sequence ID" value="XM_009249430.1"/>
</dbReference>
<dbReference type="RefSeq" id="XP_009247706.1">
    <property type="nucleotide sequence ID" value="XM_009249431.1"/>
</dbReference>
<dbReference type="RefSeq" id="XP_009247707.1">
    <property type="nucleotide sequence ID" value="XM_009249432.1"/>
</dbReference>
<dbReference type="RefSeq" id="XP_009247708.1">
    <property type="nucleotide sequence ID" value="XM_009249433.1"/>
</dbReference>
<dbReference type="RefSeq" id="XP_054385588.2">
    <property type="nucleotide sequence ID" value="XM_054529613.2"/>
</dbReference>
<dbReference type="SMR" id="Q5RCW5"/>
<dbReference type="FunCoup" id="Q5RCW5">
    <property type="interactions" value="338"/>
</dbReference>
<dbReference type="STRING" id="9601.ENSPPYP00000006940"/>
<dbReference type="MEROPS" id="I04.001"/>
<dbReference type="GlyCosmos" id="Q5RCW5">
    <property type="glycosylation" value="3 sites, No reported glycans"/>
</dbReference>
<dbReference type="Ensembl" id="ENSPPYT00000007214.3">
    <property type="protein sequence ID" value="ENSPPYP00000006940.2"/>
    <property type="gene ID" value="ENSPPYG00000006103.3"/>
</dbReference>
<dbReference type="GeneID" id="100171544"/>
<dbReference type="KEGG" id="pon:100171544"/>
<dbReference type="CTD" id="5265"/>
<dbReference type="eggNOG" id="KOG2392">
    <property type="taxonomic scope" value="Eukaryota"/>
</dbReference>
<dbReference type="GeneTree" id="ENSGT00940000154493"/>
<dbReference type="HOGENOM" id="CLU_023330_2_1_1"/>
<dbReference type="InParanoid" id="Q5RCW5"/>
<dbReference type="OrthoDB" id="671595at2759"/>
<dbReference type="TreeFam" id="TF343201"/>
<dbReference type="Proteomes" id="UP000001595">
    <property type="component" value="Chromosome 14"/>
</dbReference>
<dbReference type="GO" id="GO:0005615">
    <property type="term" value="C:extracellular space"/>
    <property type="evidence" value="ECO:0007669"/>
    <property type="project" value="InterPro"/>
</dbReference>
<dbReference type="GO" id="GO:0004867">
    <property type="term" value="F:serine-type endopeptidase inhibitor activity"/>
    <property type="evidence" value="ECO:0007669"/>
    <property type="project" value="UniProtKB-KW"/>
</dbReference>
<dbReference type="GO" id="GO:0006953">
    <property type="term" value="P:acute-phase response"/>
    <property type="evidence" value="ECO:0007669"/>
    <property type="project" value="UniProtKB-KW"/>
</dbReference>
<dbReference type="CDD" id="cd02056">
    <property type="entry name" value="serpinA1_A1AT"/>
    <property type="match status" value="1"/>
</dbReference>
<dbReference type="FunFam" id="2.30.39.10:FF:000003">
    <property type="entry name" value="alpha-1-antitrypsin isoform X1"/>
    <property type="match status" value="1"/>
</dbReference>
<dbReference type="FunFam" id="3.30.497.10:FF:000001">
    <property type="entry name" value="Serine protease inhibitor"/>
    <property type="match status" value="1"/>
</dbReference>
<dbReference type="FunFam" id="2.10.310.10:FF:000001">
    <property type="entry name" value="Serpin family A member 1"/>
    <property type="match status" value="1"/>
</dbReference>
<dbReference type="Gene3D" id="2.30.39.10">
    <property type="entry name" value="Alpha-1-antitrypsin, domain 1"/>
    <property type="match status" value="1"/>
</dbReference>
<dbReference type="Gene3D" id="3.30.497.10">
    <property type="entry name" value="Antithrombin, subunit I, domain 2"/>
    <property type="match status" value="1"/>
</dbReference>
<dbReference type="Gene3D" id="2.10.310.10">
    <property type="entry name" value="Serpins superfamily"/>
    <property type="match status" value="1"/>
</dbReference>
<dbReference type="InterPro" id="IPR023795">
    <property type="entry name" value="Serpin_CS"/>
</dbReference>
<dbReference type="InterPro" id="IPR023796">
    <property type="entry name" value="Serpin_dom"/>
</dbReference>
<dbReference type="InterPro" id="IPR000215">
    <property type="entry name" value="Serpin_fam"/>
</dbReference>
<dbReference type="InterPro" id="IPR036186">
    <property type="entry name" value="Serpin_sf"/>
</dbReference>
<dbReference type="InterPro" id="IPR042178">
    <property type="entry name" value="Serpin_sf_1"/>
</dbReference>
<dbReference type="InterPro" id="IPR042185">
    <property type="entry name" value="Serpin_sf_2"/>
</dbReference>
<dbReference type="PANTHER" id="PTHR11461:SF165">
    <property type="entry name" value="ALPHA-1-ANTITRYPSIN"/>
    <property type="match status" value="1"/>
</dbReference>
<dbReference type="PANTHER" id="PTHR11461">
    <property type="entry name" value="SERINE PROTEASE INHIBITOR, SERPIN"/>
    <property type="match status" value="1"/>
</dbReference>
<dbReference type="Pfam" id="PF00079">
    <property type="entry name" value="Serpin"/>
    <property type="match status" value="1"/>
</dbReference>
<dbReference type="SMART" id="SM00093">
    <property type="entry name" value="SERPIN"/>
    <property type="match status" value="1"/>
</dbReference>
<dbReference type="SUPFAM" id="SSF56574">
    <property type="entry name" value="Serpins"/>
    <property type="match status" value="1"/>
</dbReference>
<dbReference type="PROSITE" id="PS00284">
    <property type="entry name" value="SERPIN"/>
    <property type="match status" value="1"/>
</dbReference>
<accession>Q5RCW5</accession>
<accession>Q5NVR9</accession>
<accession>Q5RF76</accession>
<protein>
    <recommendedName>
        <fullName>Alpha-1-antitrypsin</fullName>
    </recommendedName>
    <alternativeName>
        <fullName>Alpha-1 protease inhibitor</fullName>
    </alternativeName>
    <alternativeName>
        <fullName>Alpha-1-antiproteinase</fullName>
    </alternativeName>
    <alternativeName>
        <fullName>Serpin A1</fullName>
    </alternativeName>
</protein>
<reference key="1">
    <citation type="submission" date="2004-11" db="EMBL/GenBank/DDBJ databases">
        <authorList>
            <consortium name="The German cDNA consortium"/>
        </authorList>
    </citation>
    <scope>NUCLEOTIDE SEQUENCE [LARGE SCALE MRNA]</scope>
    <source>
        <tissue>Heart</tissue>
        <tissue>Kidney</tissue>
        <tissue>Liver</tissue>
    </source>
</reference>
<feature type="signal peptide" evidence="3">
    <location>
        <begin position="1"/>
        <end position="24"/>
    </location>
</feature>
<feature type="chain" id="PRO_0000032379" description="Alpha-1-antitrypsin">
    <location>
        <begin position="25"/>
        <end position="418"/>
    </location>
</feature>
<feature type="region of interest" description="RCL">
    <location>
        <begin position="373"/>
        <end position="392"/>
    </location>
</feature>
<feature type="site" description="Reactive bond" evidence="1">
    <location>
        <begin position="382"/>
        <end position="383"/>
    </location>
</feature>
<feature type="modified residue" description="Phosphoserine" evidence="2">
    <location>
        <position position="38"/>
    </location>
</feature>
<feature type="modified residue" description="Phosphoserine" evidence="2">
    <location>
        <position position="383"/>
    </location>
</feature>
<feature type="glycosylation site" description="N-linked (GlcNAc...) asparagine" evidence="3">
    <location>
        <position position="70"/>
    </location>
</feature>
<feature type="glycosylation site" description="N-linked (GlcNAc...) asparagine" evidence="3">
    <location>
        <position position="107"/>
    </location>
</feature>
<feature type="glycosylation site" description="N-linked (GlcNAc...) asparagine" evidence="3">
    <location>
        <position position="271"/>
    </location>
</feature>
<feature type="sequence conflict" description="In Ref. 1; CAH89581." evidence="4" ref="1">
    <original>N</original>
    <variation>D</variation>
    <location>
        <position position="289"/>
    </location>
</feature>
<feature type="sequence conflict" description="In Ref. 1; CAH89581/CAI29594." evidence="4" ref="1">
    <original>R</original>
    <variation>RS</variation>
    <location>
        <position position="305"/>
    </location>
</feature>
<feature type="sequence conflict" description="In Ref. 1; CAH89581." evidence="4" ref="1">
    <original>I</original>
    <variation>T</variation>
    <location>
        <position position="332"/>
    </location>
</feature>
<feature type="sequence conflict" description="In Ref. 1; CAI29594." evidence="4" ref="1">
    <original>FLMIEQNTK</original>
    <variation>CLISVFQNA</variation>
    <location>
        <begin position="396"/>
        <end position="404"/>
    </location>
</feature>
<gene>
    <name type="primary">SERPINA1</name>
</gene>